<evidence type="ECO:0000255" key="1">
    <source>
        <dbReference type="HAMAP-Rule" id="MF_00504"/>
    </source>
</evidence>
<sequence>MTEAMNITLSTQPADARWGDKATYSINNDGITLHLNGNDDLGLIQRAARKIDGLGIKQVALTGEGWDIERCWAFWAGYKGPKGVRTVMWPDLDDAQRQELDNRLTIIDWVRDTINAPAEELGPEQLAQRAVDLLCSVACDHVTYRITKGEDLREQNYMGLHTVGRGSERSPVLLALDYNPTGDKDAPVYACLVGKGITFDSGGYSIKQSAFMDSMKSDMGGAATVTGALAFAITRGLNKRVKLFLCCADNLISGNAFKLGDIIRYRNGKNVEVMNTDAEGRLVLADGLIDASAQHPQLIIDMATLTGAAKTALGNDYHALFSFDDTLAGRLLSSAAQENEPFWRLPLAEFHRNQLPSNFAELNNTGSAAYPAGASTAAGFLSHFVENYREGWLHIDCSATYRKAPVEQWAAGATGLGVRTIANLLTA</sequence>
<protein>
    <recommendedName>
        <fullName evidence="1">Peptidase B</fullName>
        <ecNumber evidence="1">3.4.11.23</ecNumber>
    </recommendedName>
    <alternativeName>
        <fullName evidence="1">Aminopeptidase B</fullName>
    </alternativeName>
</protein>
<comment type="function">
    <text evidence="1">Probably plays an important role in intracellular peptide degradation.</text>
</comment>
<comment type="catalytic activity">
    <reaction evidence="1">
        <text>Release of an N-terminal amino acid, Xaa, from a peptide or arylamide. Xaa is preferably Glu or Asp but may be other amino acids, including Leu, Met, His, Cys and Gln.</text>
        <dbReference type="EC" id="3.4.11.23"/>
    </reaction>
</comment>
<comment type="cofactor">
    <cofactor evidence="1">
        <name>Mn(2+)</name>
        <dbReference type="ChEBI" id="CHEBI:29035"/>
    </cofactor>
    <text evidence="1">Binds 2 manganese ions per subunit.</text>
</comment>
<comment type="subunit">
    <text evidence="1">Homohexamer.</text>
</comment>
<comment type="subcellular location">
    <subcellularLocation>
        <location evidence="1">Cytoplasm</location>
    </subcellularLocation>
</comment>
<comment type="similarity">
    <text evidence="1">Belongs to the peptidase M17 family.</text>
</comment>
<name>PEPB_SALAR</name>
<feature type="chain" id="PRO_1000081510" description="Peptidase B">
    <location>
        <begin position="1"/>
        <end position="427"/>
    </location>
</feature>
<feature type="active site" evidence="1">
    <location>
        <position position="207"/>
    </location>
</feature>
<feature type="active site" evidence="1">
    <location>
        <position position="281"/>
    </location>
</feature>
<feature type="binding site" evidence="1">
    <location>
        <position position="195"/>
    </location>
    <ligand>
        <name>Mn(2+)</name>
        <dbReference type="ChEBI" id="CHEBI:29035"/>
        <label>2</label>
    </ligand>
</feature>
<feature type="binding site" evidence="1">
    <location>
        <position position="200"/>
    </location>
    <ligand>
        <name>Mn(2+)</name>
        <dbReference type="ChEBI" id="CHEBI:29035"/>
        <label>1</label>
    </ligand>
</feature>
<feature type="binding site" evidence="1">
    <location>
        <position position="200"/>
    </location>
    <ligand>
        <name>Mn(2+)</name>
        <dbReference type="ChEBI" id="CHEBI:29035"/>
        <label>2</label>
    </ligand>
</feature>
<feature type="binding site" evidence="1">
    <location>
        <position position="218"/>
    </location>
    <ligand>
        <name>Mn(2+)</name>
        <dbReference type="ChEBI" id="CHEBI:29035"/>
        <label>2</label>
    </ligand>
</feature>
<feature type="binding site" evidence="1">
    <location>
        <position position="277"/>
    </location>
    <ligand>
        <name>Mn(2+)</name>
        <dbReference type="ChEBI" id="CHEBI:29035"/>
        <label>1</label>
    </ligand>
</feature>
<feature type="binding site" evidence="1">
    <location>
        <position position="279"/>
    </location>
    <ligand>
        <name>Mn(2+)</name>
        <dbReference type="ChEBI" id="CHEBI:29035"/>
        <label>1</label>
    </ligand>
</feature>
<feature type="binding site" evidence="1">
    <location>
        <position position="279"/>
    </location>
    <ligand>
        <name>Mn(2+)</name>
        <dbReference type="ChEBI" id="CHEBI:29035"/>
        <label>2</label>
    </ligand>
</feature>
<accession>A9MHK1</accession>
<gene>
    <name evidence="1" type="primary">pepB</name>
    <name type="ordered locus">SARI_00340</name>
</gene>
<keyword id="KW-0031">Aminopeptidase</keyword>
<keyword id="KW-0963">Cytoplasm</keyword>
<keyword id="KW-0378">Hydrolase</keyword>
<keyword id="KW-0464">Manganese</keyword>
<keyword id="KW-0479">Metal-binding</keyword>
<keyword id="KW-0645">Protease</keyword>
<keyword id="KW-1185">Reference proteome</keyword>
<dbReference type="EC" id="3.4.11.23" evidence="1"/>
<dbReference type="EMBL" id="CP000880">
    <property type="protein sequence ID" value="ABX20279.1"/>
    <property type="molecule type" value="Genomic_DNA"/>
</dbReference>
<dbReference type="SMR" id="A9MHK1"/>
<dbReference type="STRING" id="41514.SARI_00340"/>
<dbReference type="MEROPS" id="M17.004"/>
<dbReference type="KEGG" id="ses:SARI_00340"/>
<dbReference type="HOGENOM" id="CLU_013734_7_1_6"/>
<dbReference type="Proteomes" id="UP000002084">
    <property type="component" value="Chromosome"/>
</dbReference>
<dbReference type="GO" id="GO:0005737">
    <property type="term" value="C:cytoplasm"/>
    <property type="evidence" value="ECO:0007669"/>
    <property type="project" value="UniProtKB-SubCell"/>
</dbReference>
<dbReference type="GO" id="GO:0030145">
    <property type="term" value="F:manganese ion binding"/>
    <property type="evidence" value="ECO:0007669"/>
    <property type="project" value="UniProtKB-UniRule"/>
</dbReference>
<dbReference type="GO" id="GO:0070006">
    <property type="term" value="F:metalloaminopeptidase activity"/>
    <property type="evidence" value="ECO:0007669"/>
    <property type="project" value="InterPro"/>
</dbReference>
<dbReference type="GO" id="GO:0006508">
    <property type="term" value="P:proteolysis"/>
    <property type="evidence" value="ECO:0007669"/>
    <property type="project" value="UniProtKB-UniRule"/>
</dbReference>
<dbReference type="CDD" id="cd00433">
    <property type="entry name" value="Peptidase_M17"/>
    <property type="match status" value="1"/>
</dbReference>
<dbReference type="FunFam" id="3.40.630.10:FF:000037">
    <property type="entry name" value="Peptidase B"/>
    <property type="match status" value="1"/>
</dbReference>
<dbReference type="Gene3D" id="3.40.630.10">
    <property type="entry name" value="Zn peptidases"/>
    <property type="match status" value="1"/>
</dbReference>
<dbReference type="HAMAP" id="MF_00504">
    <property type="entry name" value="Aminopeptidase_M17"/>
    <property type="match status" value="1"/>
</dbReference>
<dbReference type="InterPro" id="IPR011356">
    <property type="entry name" value="Leucine_aapep/pepB"/>
</dbReference>
<dbReference type="InterPro" id="IPR047620">
    <property type="entry name" value="M17_PepB-like_N"/>
</dbReference>
<dbReference type="InterPro" id="IPR008330">
    <property type="entry name" value="Pept_M17_PepB"/>
</dbReference>
<dbReference type="InterPro" id="IPR000819">
    <property type="entry name" value="Peptidase_M17_C"/>
</dbReference>
<dbReference type="NCBIfam" id="NF003450">
    <property type="entry name" value="PRK05015.1"/>
    <property type="match status" value="1"/>
</dbReference>
<dbReference type="PANTHER" id="PTHR11963">
    <property type="entry name" value="LEUCINE AMINOPEPTIDASE-RELATED"/>
    <property type="match status" value="1"/>
</dbReference>
<dbReference type="PANTHER" id="PTHR11963:SF20">
    <property type="entry name" value="PEPTIDASE B"/>
    <property type="match status" value="1"/>
</dbReference>
<dbReference type="Pfam" id="PF12404">
    <property type="entry name" value="DUF3663"/>
    <property type="match status" value="1"/>
</dbReference>
<dbReference type="Pfam" id="PF00883">
    <property type="entry name" value="Peptidase_M17"/>
    <property type="match status" value="1"/>
</dbReference>
<dbReference type="PIRSF" id="PIRSF036388">
    <property type="entry name" value="Ctsl_amnpptdse_B"/>
    <property type="match status" value="1"/>
</dbReference>
<dbReference type="PRINTS" id="PR00481">
    <property type="entry name" value="LAMNOPPTDASE"/>
</dbReference>
<dbReference type="SUPFAM" id="SSF53187">
    <property type="entry name" value="Zn-dependent exopeptidases"/>
    <property type="match status" value="1"/>
</dbReference>
<dbReference type="PROSITE" id="PS00631">
    <property type="entry name" value="CYTOSOL_AP"/>
    <property type="match status" value="1"/>
</dbReference>
<reference key="1">
    <citation type="submission" date="2007-11" db="EMBL/GenBank/DDBJ databases">
        <authorList>
            <consortium name="The Salmonella enterica serovar Arizonae Genome Sequencing Project"/>
            <person name="McClelland M."/>
            <person name="Sanderson E.K."/>
            <person name="Porwollik S."/>
            <person name="Spieth J."/>
            <person name="Clifton W.S."/>
            <person name="Fulton R."/>
            <person name="Chunyan W."/>
            <person name="Wollam A."/>
            <person name="Shah N."/>
            <person name="Pepin K."/>
            <person name="Bhonagiri V."/>
            <person name="Nash W."/>
            <person name="Johnson M."/>
            <person name="Thiruvilangam P."/>
            <person name="Wilson R."/>
        </authorList>
    </citation>
    <scope>NUCLEOTIDE SEQUENCE [LARGE SCALE GENOMIC DNA]</scope>
    <source>
        <strain>ATCC BAA-731 / CDC346-86 / RSK2980</strain>
    </source>
</reference>
<organism>
    <name type="scientific">Salmonella arizonae (strain ATCC BAA-731 / CDC346-86 / RSK2980)</name>
    <dbReference type="NCBI Taxonomy" id="41514"/>
    <lineage>
        <taxon>Bacteria</taxon>
        <taxon>Pseudomonadati</taxon>
        <taxon>Pseudomonadota</taxon>
        <taxon>Gammaproteobacteria</taxon>
        <taxon>Enterobacterales</taxon>
        <taxon>Enterobacteriaceae</taxon>
        <taxon>Salmonella</taxon>
    </lineage>
</organism>
<proteinExistence type="inferred from homology"/>